<feature type="chain" id="PRO_0000173512" description="Septin-2">
    <location>
        <begin position="1"/>
        <end position="419"/>
    </location>
</feature>
<feature type="domain" description="Septin-type G" evidence="2">
    <location>
        <begin position="40"/>
        <end position="306"/>
    </location>
</feature>
<feature type="region of interest" description="G1 motif" evidence="2">
    <location>
        <begin position="50"/>
        <end position="57"/>
    </location>
</feature>
<feature type="region of interest" description="G3 motif" evidence="2">
    <location>
        <begin position="102"/>
        <end position="105"/>
    </location>
</feature>
<feature type="region of interest" description="G4 motif" evidence="2">
    <location>
        <begin position="185"/>
        <end position="188"/>
    </location>
</feature>
<feature type="region of interest" description="Important for dimerization" evidence="1">
    <location>
        <begin position="259"/>
        <end position="269"/>
    </location>
</feature>
<feature type="binding site" evidence="1">
    <location>
        <begin position="50"/>
        <end position="57"/>
    </location>
    <ligand>
        <name>GTP</name>
        <dbReference type="ChEBI" id="CHEBI:37565"/>
    </ligand>
</feature>
<feature type="binding site" evidence="1">
    <location>
        <position position="79"/>
    </location>
    <ligand>
        <name>GTP</name>
        <dbReference type="ChEBI" id="CHEBI:37565"/>
    </ligand>
</feature>
<feature type="binding site" evidence="1">
    <location>
        <position position="105"/>
    </location>
    <ligand>
        <name>GTP</name>
        <dbReference type="ChEBI" id="CHEBI:37565"/>
    </ligand>
</feature>
<feature type="binding site" evidence="1">
    <location>
        <begin position="186"/>
        <end position="194"/>
    </location>
    <ligand>
        <name>GTP</name>
        <dbReference type="ChEBI" id="CHEBI:37565"/>
    </ligand>
</feature>
<feature type="binding site" evidence="1">
    <location>
        <position position="240"/>
    </location>
    <ligand>
        <name>GTP</name>
        <dbReference type="ChEBI" id="CHEBI:37565"/>
    </ligand>
</feature>
<feature type="binding site" evidence="1">
    <location>
        <position position="255"/>
    </location>
    <ligand>
        <name>GTP</name>
        <dbReference type="ChEBI" id="CHEBI:37565"/>
    </ligand>
</feature>
<feature type="strand" evidence="4">
    <location>
        <begin position="42"/>
        <end position="49"/>
    </location>
</feature>
<feature type="helix" evidence="4">
    <location>
        <begin position="56"/>
        <end position="64"/>
    </location>
</feature>
<feature type="strand" evidence="4">
    <location>
        <begin position="81"/>
        <end position="89"/>
    </location>
</feature>
<feature type="strand" evidence="4">
    <location>
        <begin position="96"/>
        <end position="105"/>
    </location>
</feature>
<feature type="strand" evidence="4">
    <location>
        <begin position="109"/>
        <end position="111"/>
    </location>
</feature>
<feature type="helix" evidence="4">
    <location>
        <begin position="117"/>
        <end position="135"/>
    </location>
</feature>
<feature type="turn" evidence="4">
    <location>
        <begin position="141"/>
        <end position="143"/>
    </location>
</feature>
<feature type="strand" evidence="4">
    <location>
        <begin position="151"/>
        <end position="156"/>
    </location>
</feature>
<feature type="helix" evidence="4">
    <location>
        <begin position="165"/>
        <end position="174"/>
    </location>
</feature>
<feature type="turn" evidence="4">
    <location>
        <begin position="175"/>
        <end position="177"/>
    </location>
</feature>
<feature type="strand" evidence="4">
    <location>
        <begin position="178"/>
        <end position="186"/>
    </location>
</feature>
<feature type="helix" evidence="4">
    <location>
        <begin position="187"/>
        <end position="189"/>
    </location>
</feature>
<feature type="helix" evidence="4">
    <location>
        <begin position="192"/>
        <end position="208"/>
    </location>
</feature>
<feature type="helix" evidence="4">
    <location>
        <begin position="224"/>
        <end position="232"/>
    </location>
</feature>
<feature type="strand" evidence="4">
    <location>
        <begin position="235"/>
        <end position="237"/>
    </location>
</feature>
<feature type="strand" evidence="4">
    <location>
        <begin position="253"/>
        <end position="257"/>
    </location>
</feature>
<feature type="strand" evidence="4">
    <location>
        <begin position="260"/>
        <end position="263"/>
    </location>
</feature>
<feature type="turn" evidence="4">
    <location>
        <begin position="267"/>
        <end position="269"/>
    </location>
</feature>
<feature type="helix" evidence="4">
    <location>
        <begin position="272"/>
        <end position="275"/>
    </location>
</feature>
<feature type="helix" evidence="4">
    <location>
        <begin position="276"/>
        <end position="279"/>
    </location>
</feature>
<feature type="helix" evidence="4">
    <location>
        <begin position="281"/>
        <end position="293"/>
    </location>
</feature>
<feature type="helix" evidence="4">
    <location>
        <begin position="295"/>
        <end position="306"/>
    </location>
</feature>
<comment type="function">
    <text evidence="1">Involved in cytokinesis.</text>
</comment>
<comment type="subunit">
    <text>May assemble into a multicomponent structure.</text>
</comment>
<comment type="subcellular location">
    <subcellularLocation>
        <location>Cytoplasm</location>
    </subcellularLocation>
    <subcellularLocation>
        <location evidence="1">Cytoplasm</location>
        <location evidence="1">Cytoskeleton</location>
        <location evidence="1">Spindle</location>
    </subcellularLocation>
</comment>
<comment type="similarity">
    <text evidence="2">Belongs to the TRAFAC class TrmE-Era-EngA-EngB-Septin-like GTPase superfamily. Septin GTPase family.</text>
</comment>
<accession>P54359</accession>
<accession>Q24092</accession>
<accession>Q9VDK8</accession>
<gene>
    <name evidence="3" type="primary">Septin2</name>
    <name evidence="3" type="synonym">Sep2</name>
    <name evidence="3" type="ORF">CG4173</name>
</gene>
<protein>
    <recommendedName>
        <fullName evidence="3">Septin-2</fullName>
    </recommendedName>
</protein>
<sequence>MSVEVDFVDKKEVHLRTLKQSGHVGFDSLPDQLVNKSVQNGFVFNVMCIGETGLGKSTLMDTLFNTSFESTPSPHTLPSVKLKAHTYELQESNVRLKLTICDTVGYGDQINKDDSFKAVVDYIDAQFENYLQEELKIKRSLVTCHDSRIHICLYFICPTGHGLKSLDLVCMKKLDSKVNIIPVIAKADTISKVELQRFKAKIIQELNANGVHIYQFPTDDETVAETNTSMNSHIPFAVVGSTEFIKVGNKLIRARQYPWGTVQVENETHCDFVKLREMLIRTNMEDMREKTHTRHYELYRQKRLEQMGFSDVDSDNKPISFQQTFEAKRSNHLAELQSKEEEVRQMFVQRVKEKEAELKESEKDLHAKFEKLKRDHAEEKRKLEESRKALEEDYLDFQRRKQQLATAHHTLTLGKSKKK</sequence>
<keyword id="KW-0002">3D-structure</keyword>
<keyword id="KW-0131">Cell cycle</keyword>
<keyword id="KW-0132">Cell division</keyword>
<keyword id="KW-0963">Cytoplasm</keyword>
<keyword id="KW-0206">Cytoskeleton</keyword>
<keyword id="KW-0342">GTP-binding</keyword>
<keyword id="KW-0498">Mitosis</keyword>
<keyword id="KW-0547">Nucleotide-binding</keyword>
<keyword id="KW-1185">Reference proteome</keyword>
<proteinExistence type="evidence at protein level"/>
<reference key="1">
    <citation type="submission" date="1995-07" db="EMBL/GenBank/DDBJ databases">
        <authorList>
            <person name="Al-Awar O.S."/>
            <person name="Peifer M."/>
            <person name="Pringle J.R."/>
        </authorList>
    </citation>
    <scope>NUCLEOTIDE SEQUENCE [MRNA]</scope>
</reference>
<reference key="2">
    <citation type="journal article" date="2000" name="Science">
        <title>The genome sequence of Drosophila melanogaster.</title>
        <authorList>
            <person name="Adams M.D."/>
            <person name="Celniker S.E."/>
            <person name="Holt R.A."/>
            <person name="Evans C.A."/>
            <person name="Gocayne J.D."/>
            <person name="Amanatides P.G."/>
            <person name="Scherer S.E."/>
            <person name="Li P.W."/>
            <person name="Hoskins R.A."/>
            <person name="Galle R.F."/>
            <person name="George R.A."/>
            <person name="Lewis S.E."/>
            <person name="Richards S."/>
            <person name="Ashburner M."/>
            <person name="Henderson S.N."/>
            <person name="Sutton G.G."/>
            <person name="Wortman J.R."/>
            <person name="Yandell M.D."/>
            <person name="Zhang Q."/>
            <person name="Chen L.X."/>
            <person name="Brandon R.C."/>
            <person name="Rogers Y.-H.C."/>
            <person name="Blazej R.G."/>
            <person name="Champe M."/>
            <person name="Pfeiffer B.D."/>
            <person name="Wan K.H."/>
            <person name="Doyle C."/>
            <person name="Baxter E.G."/>
            <person name="Helt G."/>
            <person name="Nelson C.R."/>
            <person name="Miklos G.L.G."/>
            <person name="Abril J.F."/>
            <person name="Agbayani A."/>
            <person name="An H.-J."/>
            <person name="Andrews-Pfannkoch C."/>
            <person name="Baldwin D."/>
            <person name="Ballew R.M."/>
            <person name="Basu A."/>
            <person name="Baxendale J."/>
            <person name="Bayraktaroglu L."/>
            <person name="Beasley E.M."/>
            <person name="Beeson K.Y."/>
            <person name="Benos P.V."/>
            <person name="Berman B.P."/>
            <person name="Bhandari D."/>
            <person name="Bolshakov S."/>
            <person name="Borkova D."/>
            <person name="Botchan M.R."/>
            <person name="Bouck J."/>
            <person name="Brokstein P."/>
            <person name="Brottier P."/>
            <person name="Burtis K.C."/>
            <person name="Busam D.A."/>
            <person name="Butler H."/>
            <person name="Cadieu E."/>
            <person name="Center A."/>
            <person name="Chandra I."/>
            <person name="Cherry J.M."/>
            <person name="Cawley S."/>
            <person name="Dahlke C."/>
            <person name="Davenport L.B."/>
            <person name="Davies P."/>
            <person name="de Pablos B."/>
            <person name="Delcher A."/>
            <person name="Deng Z."/>
            <person name="Mays A.D."/>
            <person name="Dew I."/>
            <person name="Dietz S.M."/>
            <person name="Dodson K."/>
            <person name="Doup L.E."/>
            <person name="Downes M."/>
            <person name="Dugan-Rocha S."/>
            <person name="Dunkov B.C."/>
            <person name="Dunn P."/>
            <person name="Durbin K.J."/>
            <person name="Evangelista C.C."/>
            <person name="Ferraz C."/>
            <person name="Ferriera S."/>
            <person name="Fleischmann W."/>
            <person name="Fosler C."/>
            <person name="Gabrielian A.E."/>
            <person name="Garg N.S."/>
            <person name="Gelbart W.M."/>
            <person name="Glasser K."/>
            <person name="Glodek A."/>
            <person name="Gong F."/>
            <person name="Gorrell J.H."/>
            <person name="Gu Z."/>
            <person name="Guan P."/>
            <person name="Harris M."/>
            <person name="Harris N.L."/>
            <person name="Harvey D.A."/>
            <person name="Heiman T.J."/>
            <person name="Hernandez J.R."/>
            <person name="Houck J."/>
            <person name="Hostin D."/>
            <person name="Houston K.A."/>
            <person name="Howland T.J."/>
            <person name="Wei M.-H."/>
            <person name="Ibegwam C."/>
            <person name="Jalali M."/>
            <person name="Kalush F."/>
            <person name="Karpen G.H."/>
            <person name="Ke Z."/>
            <person name="Kennison J.A."/>
            <person name="Ketchum K.A."/>
            <person name="Kimmel B.E."/>
            <person name="Kodira C.D."/>
            <person name="Kraft C.L."/>
            <person name="Kravitz S."/>
            <person name="Kulp D."/>
            <person name="Lai Z."/>
            <person name="Lasko P."/>
            <person name="Lei Y."/>
            <person name="Levitsky A.A."/>
            <person name="Li J.H."/>
            <person name="Li Z."/>
            <person name="Liang Y."/>
            <person name="Lin X."/>
            <person name="Liu X."/>
            <person name="Mattei B."/>
            <person name="McIntosh T.C."/>
            <person name="McLeod M.P."/>
            <person name="McPherson D."/>
            <person name="Merkulov G."/>
            <person name="Milshina N.V."/>
            <person name="Mobarry C."/>
            <person name="Morris J."/>
            <person name="Moshrefi A."/>
            <person name="Mount S.M."/>
            <person name="Moy M."/>
            <person name="Murphy B."/>
            <person name="Murphy L."/>
            <person name="Muzny D.M."/>
            <person name="Nelson D.L."/>
            <person name="Nelson D.R."/>
            <person name="Nelson K.A."/>
            <person name="Nixon K."/>
            <person name="Nusskern D.R."/>
            <person name="Pacleb J.M."/>
            <person name="Palazzolo M."/>
            <person name="Pittman G.S."/>
            <person name="Pan S."/>
            <person name="Pollard J."/>
            <person name="Puri V."/>
            <person name="Reese M.G."/>
            <person name="Reinert K."/>
            <person name="Remington K."/>
            <person name="Saunders R.D.C."/>
            <person name="Scheeler F."/>
            <person name="Shen H."/>
            <person name="Shue B.C."/>
            <person name="Siden-Kiamos I."/>
            <person name="Simpson M."/>
            <person name="Skupski M.P."/>
            <person name="Smith T.J."/>
            <person name="Spier E."/>
            <person name="Spradling A.C."/>
            <person name="Stapleton M."/>
            <person name="Strong R."/>
            <person name="Sun E."/>
            <person name="Svirskas R."/>
            <person name="Tector C."/>
            <person name="Turner R."/>
            <person name="Venter E."/>
            <person name="Wang A.H."/>
            <person name="Wang X."/>
            <person name="Wang Z.-Y."/>
            <person name="Wassarman D.A."/>
            <person name="Weinstock G.M."/>
            <person name="Weissenbach J."/>
            <person name="Williams S.M."/>
            <person name="Woodage T."/>
            <person name="Worley K.C."/>
            <person name="Wu D."/>
            <person name="Yang S."/>
            <person name="Yao Q.A."/>
            <person name="Ye J."/>
            <person name="Yeh R.-F."/>
            <person name="Zaveri J.S."/>
            <person name="Zhan M."/>
            <person name="Zhang G."/>
            <person name="Zhao Q."/>
            <person name="Zheng L."/>
            <person name="Zheng X.H."/>
            <person name="Zhong F.N."/>
            <person name="Zhong W."/>
            <person name="Zhou X."/>
            <person name="Zhu S.C."/>
            <person name="Zhu X."/>
            <person name="Smith H.O."/>
            <person name="Gibbs R.A."/>
            <person name="Myers E.W."/>
            <person name="Rubin G.M."/>
            <person name="Venter J.C."/>
        </authorList>
    </citation>
    <scope>NUCLEOTIDE SEQUENCE [LARGE SCALE GENOMIC DNA]</scope>
    <source>
        <strain>Berkeley</strain>
    </source>
</reference>
<reference key="3">
    <citation type="journal article" date="2002" name="Genome Biol.">
        <title>Annotation of the Drosophila melanogaster euchromatic genome: a systematic review.</title>
        <authorList>
            <person name="Misra S."/>
            <person name="Crosby M.A."/>
            <person name="Mungall C.J."/>
            <person name="Matthews B.B."/>
            <person name="Campbell K.S."/>
            <person name="Hradecky P."/>
            <person name="Huang Y."/>
            <person name="Kaminker J.S."/>
            <person name="Millburn G.H."/>
            <person name="Prochnik S.E."/>
            <person name="Smith C.D."/>
            <person name="Tupy J.L."/>
            <person name="Whitfield E.J."/>
            <person name="Bayraktaroglu L."/>
            <person name="Berman B.P."/>
            <person name="Bettencourt B.R."/>
            <person name="Celniker S.E."/>
            <person name="de Grey A.D.N.J."/>
            <person name="Drysdale R.A."/>
            <person name="Harris N.L."/>
            <person name="Richter J."/>
            <person name="Russo S."/>
            <person name="Schroeder A.J."/>
            <person name="Shu S.Q."/>
            <person name="Stapleton M."/>
            <person name="Yamada C."/>
            <person name="Ashburner M."/>
            <person name="Gelbart W.M."/>
            <person name="Rubin G.M."/>
            <person name="Lewis S.E."/>
        </authorList>
    </citation>
    <scope>GENOME REANNOTATION</scope>
    <source>
        <strain>Berkeley</strain>
    </source>
</reference>
<reference key="4">
    <citation type="journal article" date="2002" name="Genome Biol.">
        <title>A Drosophila full-length cDNA resource.</title>
        <authorList>
            <person name="Stapleton M."/>
            <person name="Carlson J.W."/>
            <person name="Brokstein P."/>
            <person name="Yu C."/>
            <person name="Champe M."/>
            <person name="George R.A."/>
            <person name="Guarin H."/>
            <person name="Kronmiller B."/>
            <person name="Pacleb J.M."/>
            <person name="Park S."/>
            <person name="Wan K.H."/>
            <person name="Rubin G.M."/>
            <person name="Celniker S.E."/>
        </authorList>
    </citation>
    <scope>NUCLEOTIDE SEQUENCE [LARGE SCALE MRNA]</scope>
    <source>
        <strain>Berkeley</strain>
        <tissue>Embryo</tissue>
    </source>
</reference>
<organism>
    <name type="scientific">Drosophila melanogaster</name>
    <name type="common">Fruit fly</name>
    <dbReference type="NCBI Taxonomy" id="7227"/>
    <lineage>
        <taxon>Eukaryota</taxon>
        <taxon>Metazoa</taxon>
        <taxon>Ecdysozoa</taxon>
        <taxon>Arthropoda</taxon>
        <taxon>Hexapoda</taxon>
        <taxon>Insecta</taxon>
        <taxon>Pterygota</taxon>
        <taxon>Neoptera</taxon>
        <taxon>Endopterygota</taxon>
        <taxon>Diptera</taxon>
        <taxon>Brachycera</taxon>
        <taxon>Muscomorpha</taxon>
        <taxon>Ephydroidea</taxon>
        <taxon>Drosophilidae</taxon>
        <taxon>Drosophila</taxon>
        <taxon>Sophophora</taxon>
    </lineage>
</organism>
<dbReference type="EMBL" id="U28966">
    <property type="protein sequence ID" value="AAB52512.1"/>
    <property type="molecule type" value="mRNA"/>
</dbReference>
<dbReference type="EMBL" id="AE014297">
    <property type="protein sequence ID" value="AAF55783.1"/>
    <property type="molecule type" value="Genomic_DNA"/>
</dbReference>
<dbReference type="EMBL" id="AY061281">
    <property type="protein sequence ID" value="AAL28829.1"/>
    <property type="molecule type" value="mRNA"/>
</dbReference>
<dbReference type="RefSeq" id="NP_524417.1">
    <property type="nucleotide sequence ID" value="NM_079693.4"/>
</dbReference>
<dbReference type="PDB" id="8DKT">
    <property type="method" value="X-ray"/>
    <property type="resolution" value="2.38 A"/>
    <property type="chains" value="B=41-308"/>
</dbReference>
<dbReference type="PDBsum" id="8DKT"/>
<dbReference type="SMR" id="P54359"/>
<dbReference type="BioGRID" id="67416">
    <property type="interactions" value="18"/>
</dbReference>
<dbReference type="DIP" id="DIP-20060N"/>
<dbReference type="FunCoup" id="P54359">
    <property type="interactions" value="459"/>
</dbReference>
<dbReference type="IntAct" id="P54359">
    <property type="interactions" value="32"/>
</dbReference>
<dbReference type="STRING" id="7227.FBpp0083352"/>
<dbReference type="GlyGen" id="P54359">
    <property type="glycosylation" value="1 site"/>
</dbReference>
<dbReference type="PaxDb" id="7227-FBpp0083352"/>
<dbReference type="EnsemblMetazoa" id="FBtr0083945">
    <property type="protein sequence ID" value="FBpp0083352"/>
    <property type="gene ID" value="FBgn0014029"/>
</dbReference>
<dbReference type="GeneID" id="42438"/>
<dbReference type="KEGG" id="dme:Dmel_CG4173"/>
<dbReference type="AGR" id="FB:FBgn0014029"/>
<dbReference type="CTD" id="4735"/>
<dbReference type="FlyBase" id="FBgn0014029">
    <property type="gene designation" value="Septin2"/>
</dbReference>
<dbReference type="VEuPathDB" id="VectorBase:FBgn0014029"/>
<dbReference type="eggNOG" id="KOG3859">
    <property type="taxonomic scope" value="Eukaryota"/>
</dbReference>
<dbReference type="GeneTree" id="ENSGT00940000168657"/>
<dbReference type="HOGENOM" id="CLU_017718_8_1_1"/>
<dbReference type="InParanoid" id="P54359"/>
<dbReference type="OMA" id="NNGIHIY"/>
<dbReference type="OrthoDB" id="416553at2759"/>
<dbReference type="PhylomeDB" id="P54359"/>
<dbReference type="SignaLink" id="P54359"/>
<dbReference type="BioGRID-ORCS" id="42438">
    <property type="hits" value="0 hits in 3 CRISPR screens"/>
</dbReference>
<dbReference type="ChiTaRS" id="Sep2">
    <property type="organism name" value="fly"/>
</dbReference>
<dbReference type="GenomeRNAi" id="42438"/>
<dbReference type="PRO" id="PR:P54359"/>
<dbReference type="Proteomes" id="UP000000803">
    <property type="component" value="Chromosome 3R"/>
</dbReference>
<dbReference type="Bgee" id="FBgn0014029">
    <property type="expression patterns" value="Expressed in embryonic/larval hemocyte (Drosophila) and 186 other cell types or tissues"/>
</dbReference>
<dbReference type="ExpressionAtlas" id="P54359">
    <property type="expression patterns" value="baseline and differential"/>
</dbReference>
<dbReference type="GO" id="GO:0032153">
    <property type="term" value="C:cell division site"/>
    <property type="evidence" value="ECO:0000318"/>
    <property type="project" value="GO_Central"/>
</dbReference>
<dbReference type="GO" id="GO:0015630">
    <property type="term" value="C:microtubule cytoskeleton"/>
    <property type="evidence" value="ECO:0000318"/>
    <property type="project" value="GO_Central"/>
</dbReference>
<dbReference type="GO" id="GO:0031105">
    <property type="term" value="C:septin complex"/>
    <property type="evidence" value="ECO:0000314"/>
    <property type="project" value="FlyBase"/>
</dbReference>
<dbReference type="GO" id="GO:0005940">
    <property type="term" value="C:septin ring"/>
    <property type="evidence" value="ECO:0000318"/>
    <property type="project" value="GO_Central"/>
</dbReference>
<dbReference type="GO" id="GO:0005819">
    <property type="term" value="C:spindle"/>
    <property type="evidence" value="ECO:0007669"/>
    <property type="project" value="UniProtKB-SubCell"/>
</dbReference>
<dbReference type="GO" id="GO:0051015">
    <property type="term" value="F:actin filament binding"/>
    <property type="evidence" value="ECO:0000314"/>
    <property type="project" value="FlyBase"/>
</dbReference>
<dbReference type="GO" id="GO:0005525">
    <property type="term" value="F:GTP binding"/>
    <property type="evidence" value="ECO:0007669"/>
    <property type="project" value="UniProtKB-KW"/>
</dbReference>
<dbReference type="GO" id="GO:0003924">
    <property type="term" value="F:GTPase activity"/>
    <property type="evidence" value="ECO:0000314"/>
    <property type="project" value="FlyBase"/>
</dbReference>
<dbReference type="GO" id="GO:0060090">
    <property type="term" value="F:molecular adaptor activity"/>
    <property type="evidence" value="ECO:0000318"/>
    <property type="project" value="GO_Central"/>
</dbReference>
<dbReference type="GO" id="GO:0042803">
    <property type="term" value="F:protein homodimerization activity"/>
    <property type="evidence" value="ECO:0000314"/>
    <property type="project" value="FlyBase"/>
</dbReference>
<dbReference type="GO" id="GO:0044837">
    <property type="term" value="P:actomyosin contractile ring organization"/>
    <property type="evidence" value="ECO:0000315"/>
    <property type="project" value="FlyBase"/>
</dbReference>
<dbReference type="GO" id="GO:0007298">
    <property type="term" value="P:border follicle cell migration"/>
    <property type="evidence" value="ECO:0000315"/>
    <property type="project" value="FlyBase"/>
</dbReference>
<dbReference type="GO" id="GO:0007349">
    <property type="term" value="P:cellularization"/>
    <property type="evidence" value="ECO:0000304"/>
    <property type="project" value="FlyBase"/>
</dbReference>
<dbReference type="GO" id="GO:0061640">
    <property type="term" value="P:cytoskeleton-dependent cytokinesis"/>
    <property type="evidence" value="ECO:0000318"/>
    <property type="project" value="GO_Central"/>
</dbReference>
<dbReference type="GO" id="GO:0007295">
    <property type="term" value="P:growth of a germarium-derived egg chamber"/>
    <property type="evidence" value="ECO:0000315"/>
    <property type="project" value="FlyBase"/>
</dbReference>
<dbReference type="GO" id="GO:0007444">
    <property type="term" value="P:imaginal disc development"/>
    <property type="evidence" value="ECO:0000316"/>
    <property type="project" value="FlyBase"/>
</dbReference>
<dbReference type="GO" id="GO:0008104">
    <property type="term" value="P:protein localization"/>
    <property type="evidence" value="ECO:0000318"/>
    <property type="project" value="GO_Central"/>
</dbReference>
<dbReference type="GO" id="GO:0051726">
    <property type="term" value="P:regulation of cell cycle"/>
    <property type="evidence" value="ECO:0000316"/>
    <property type="project" value="FlyBase"/>
</dbReference>
<dbReference type="GO" id="GO:0042060">
    <property type="term" value="P:wound healing"/>
    <property type="evidence" value="ECO:0000315"/>
    <property type="project" value="FlyBase"/>
</dbReference>
<dbReference type="CDD" id="cd01850">
    <property type="entry name" value="CDC_Septin"/>
    <property type="match status" value="1"/>
</dbReference>
<dbReference type="FunFam" id="3.40.50.300:FF:000036">
    <property type="entry name" value="septin-6 isoform X2"/>
    <property type="match status" value="1"/>
</dbReference>
<dbReference type="Gene3D" id="3.40.50.300">
    <property type="entry name" value="P-loop containing nucleotide triphosphate hydrolases"/>
    <property type="match status" value="1"/>
</dbReference>
<dbReference type="InterPro" id="IPR030379">
    <property type="entry name" value="G_SEPTIN_dom"/>
</dbReference>
<dbReference type="InterPro" id="IPR027417">
    <property type="entry name" value="P-loop_NTPase"/>
</dbReference>
<dbReference type="InterPro" id="IPR016491">
    <property type="entry name" value="Septin"/>
</dbReference>
<dbReference type="PANTHER" id="PTHR18884">
    <property type="entry name" value="SEPTIN"/>
    <property type="match status" value="1"/>
</dbReference>
<dbReference type="Pfam" id="PF00735">
    <property type="entry name" value="Septin"/>
    <property type="match status" value="1"/>
</dbReference>
<dbReference type="PIRSF" id="PIRSF006698">
    <property type="entry name" value="Septin"/>
    <property type="match status" value="1"/>
</dbReference>
<dbReference type="SUPFAM" id="SSF52540">
    <property type="entry name" value="P-loop containing nucleoside triphosphate hydrolases"/>
    <property type="match status" value="1"/>
</dbReference>
<dbReference type="PROSITE" id="PS51719">
    <property type="entry name" value="G_SEPTIN"/>
    <property type="match status" value="1"/>
</dbReference>
<name>SEPT2_DROME</name>
<evidence type="ECO:0000250" key="1"/>
<evidence type="ECO:0000255" key="2">
    <source>
        <dbReference type="PROSITE-ProRule" id="PRU01056"/>
    </source>
</evidence>
<evidence type="ECO:0000312" key="3">
    <source>
        <dbReference type="FlyBase" id="FBgn0014029"/>
    </source>
</evidence>
<evidence type="ECO:0007829" key="4">
    <source>
        <dbReference type="PDB" id="8DKT"/>
    </source>
</evidence>